<sequence length="387" mass="43357">MKLLVLLVTLLVLSWTSAEDVGDQEILQQHNEDNNHKSELGEAAPQRTDNETSQLGQETPTIRVARAYEFSSKSNLEWVRWNGHIPSNAVKISNTYVGREDYVCRVGCEAGYYTPKKGPSCFYPYGFTEQHSKMFHILVNRDNFEILEWKWKTGGEVPENAVKACRDLYVAKNKYGLGKLHQSHHVFYLPWKGTEYKYNEYYVLNVNMDVVEQKITNVRYNMKGVEVHKDKPETLRSTSVKNYQCREATKQVTLEKSTETSQSWDVSNSITLGVSTEVSAGIPNIADVSVAVSAETSVEISHGTSKTESTSHSLSVSATIPPNSSCSITMEGCTFKANIPFTGRLTRKYSNGKVTSSSVKGIYKKVQVGEIQAVLHRCDKIADAKPC</sequence>
<dbReference type="EC" id="3.4.-.-"/>
<dbReference type="EMBL" id="AY707911">
    <property type="protein sequence ID" value="AAU11825.1"/>
    <property type="molecule type" value="mRNA"/>
</dbReference>
<dbReference type="SMR" id="Q66S13"/>
<dbReference type="GO" id="GO:0005576">
    <property type="term" value="C:extracellular region"/>
    <property type="evidence" value="ECO:0007669"/>
    <property type="project" value="UniProtKB-SubCell"/>
</dbReference>
<dbReference type="GO" id="GO:0016787">
    <property type="term" value="F:hydrolase activity"/>
    <property type="evidence" value="ECO:0007669"/>
    <property type="project" value="UniProtKB-KW"/>
</dbReference>
<dbReference type="GO" id="GO:0090729">
    <property type="term" value="F:toxin activity"/>
    <property type="evidence" value="ECO:0007669"/>
    <property type="project" value="UniProtKB-KW"/>
</dbReference>
<dbReference type="CDD" id="cd20220">
    <property type="entry name" value="PFM_natterin-3-like"/>
    <property type="match status" value="1"/>
</dbReference>
<dbReference type="Gene3D" id="2.170.15.10">
    <property type="entry name" value="Proaerolysin, chain A, domain 3"/>
    <property type="match status" value="1"/>
</dbReference>
<dbReference type="InterPro" id="IPR006616">
    <property type="entry name" value="DM9_repeat"/>
</dbReference>
<dbReference type="PANTHER" id="PTHR31649">
    <property type="entry name" value="AGAP009604-PA"/>
    <property type="match status" value="1"/>
</dbReference>
<dbReference type="PANTHER" id="PTHR31649:SF1">
    <property type="entry name" value="FARNESOIC ACID O-METHYL TRANSFERASE DOMAIN-CONTAINING PROTEIN"/>
    <property type="match status" value="1"/>
</dbReference>
<dbReference type="Pfam" id="PF11901">
    <property type="entry name" value="DM9"/>
    <property type="match status" value="1"/>
</dbReference>
<dbReference type="SMART" id="SM00696">
    <property type="entry name" value="DM9"/>
    <property type="match status" value="1"/>
</dbReference>
<dbReference type="SUPFAM" id="SSF56973">
    <property type="entry name" value="Aerolisin/ETX pore-forming domain"/>
    <property type="match status" value="1"/>
</dbReference>
<comment type="function">
    <text evidence="1">Shows nociceptive, edema-inducing and kininogenase activity with release of kallidin from low molecular weight kininogen. The cleavage occurs at Met-Lys bonds.</text>
</comment>
<comment type="activity regulation">
    <text evidence="1">Inhibited by tissue-kallikrein inhibitor TKI and trasylol. Plasma kallikrein inhibitor PKSI527 and classical inhibitors of serine-, metallo-, thiol- or aspartate-peptidases evokes a minor inhibition of the peptide digestion.</text>
</comment>
<comment type="subcellular location">
    <subcellularLocation>
        <location evidence="5">Secreted</location>
    </subcellularLocation>
</comment>
<comment type="tissue specificity">
    <text evidence="5">Expressed by the venom gland.</text>
</comment>
<comment type="PTM">
    <text evidence="4">Contains 4 disulfide bonds.</text>
</comment>
<comment type="similarity">
    <text evidence="4">Belongs to the natterin family.</text>
</comment>
<protein>
    <recommendedName>
        <fullName>Natterin-4</fullName>
        <ecNumber>3.4.-.-</ecNumber>
    </recommendedName>
</protein>
<feature type="signal peptide" evidence="2">
    <location>
        <begin position="1"/>
        <end position="18"/>
    </location>
</feature>
<feature type="propeptide" id="PRO_0000285220" evidence="5">
    <location>
        <begin position="19"/>
        <end position="46"/>
    </location>
</feature>
<feature type="chain" id="PRO_5000093998" description="Natterin-4" evidence="5">
    <location>
        <begin position="48"/>
        <end position="387"/>
    </location>
</feature>
<feature type="region of interest" description="Disordered" evidence="3">
    <location>
        <begin position="31"/>
        <end position="57"/>
    </location>
</feature>
<feature type="compositionally biased region" description="Basic and acidic residues" evidence="3">
    <location>
        <begin position="31"/>
        <end position="40"/>
    </location>
</feature>
<proteinExistence type="evidence at transcript level"/>
<organism>
    <name type="scientific">Thalassophryne nattereri</name>
    <name type="common">Copper Joe toadfish</name>
    <dbReference type="NCBI Taxonomy" id="289382"/>
    <lineage>
        <taxon>Eukaryota</taxon>
        <taxon>Metazoa</taxon>
        <taxon>Chordata</taxon>
        <taxon>Craniata</taxon>
        <taxon>Vertebrata</taxon>
        <taxon>Euteleostomi</taxon>
        <taxon>Actinopterygii</taxon>
        <taxon>Neopterygii</taxon>
        <taxon>Teleostei</taxon>
        <taxon>Neoteleostei</taxon>
        <taxon>Acanthomorphata</taxon>
        <taxon>Batrachoidaria</taxon>
        <taxon>Batrachoididae</taxon>
        <taxon>Thalassophryne</taxon>
    </lineage>
</organism>
<name>NATT4_THANI</name>
<keyword id="KW-1015">Disulfide bond</keyword>
<keyword id="KW-0378">Hydrolase</keyword>
<keyword id="KW-0964">Secreted</keyword>
<keyword id="KW-0732">Signal</keyword>
<keyword id="KW-0800">Toxin</keyword>
<reference key="1">
    <citation type="journal article" date="2005" name="Biochimie">
        <title>Natterins, a new class of proteins with kininogenase activity characterized from Thalassophryne nattereri fish venom.</title>
        <authorList>
            <person name="Magalhaes G.S."/>
            <person name="Lopes-Ferreira M."/>
            <person name="Junqueira-de-Azevedo I.L.M."/>
            <person name="Spencer P.J."/>
            <person name="Araujo M.S."/>
            <person name="Portaro F.C.V."/>
            <person name="Ma L."/>
            <person name="Valente R.H."/>
            <person name="Juliano L."/>
            <person name="Fox J.W."/>
            <person name="Ho P.L."/>
            <person name="Moura-da-Silva A.M."/>
        </authorList>
    </citation>
    <scope>NUCLEOTIDE SEQUENCE [MRNA]</scope>
    <source>
        <tissue>Venom gland</tissue>
    </source>
</reference>
<accession>Q66S13</accession>
<evidence type="ECO:0000250" key="1">
    <source>
        <dbReference type="UniProtKB" id="Q66S25"/>
    </source>
</evidence>
<evidence type="ECO:0000255" key="2"/>
<evidence type="ECO:0000256" key="3">
    <source>
        <dbReference type="SAM" id="MobiDB-lite"/>
    </source>
</evidence>
<evidence type="ECO:0000305" key="4"/>
<evidence type="ECO:0000305" key="5">
    <source>
    </source>
</evidence>